<evidence type="ECO:0000255" key="1">
    <source>
        <dbReference type="HAMAP-Rule" id="MF_00111"/>
    </source>
</evidence>
<reference key="1">
    <citation type="submission" date="2008-06" db="EMBL/GenBank/DDBJ databases">
        <title>Complete sequence of Chlorobaculum parvum NCIB 8327.</title>
        <authorList>
            <consortium name="US DOE Joint Genome Institute"/>
            <person name="Lucas S."/>
            <person name="Copeland A."/>
            <person name="Lapidus A."/>
            <person name="Glavina del Rio T."/>
            <person name="Dalin E."/>
            <person name="Tice H."/>
            <person name="Bruce D."/>
            <person name="Goodwin L."/>
            <person name="Pitluck S."/>
            <person name="Schmutz J."/>
            <person name="Larimer F."/>
            <person name="Land M."/>
            <person name="Hauser L."/>
            <person name="Kyrpides N."/>
            <person name="Mikhailova N."/>
            <person name="Zhao F."/>
            <person name="Li T."/>
            <person name="Liu Z."/>
            <person name="Overmann J."/>
            <person name="Bryant D.A."/>
            <person name="Richardson P."/>
        </authorList>
    </citation>
    <scope>NUCLEOTIDE SEQUENCE [LARGE SCALE GENOMIC DNA]</scope>
    <source>
        <strain>DSM 263 / NCIMB 8327</strain>
    </source>
</reference>
<feature type="chain" id="PRO_1000094679" description="UDP-N-acetylglucosamine 1-carboxyvinyltransferase">
    <location>
        <begin position="1"/>
        <end position="424"/>
    </location>
</feature>
<feature type="active site" description="Proton donor" evidence="1">
    <location>
        <position position="117"/>
    </location>
</feature>
<feature type="binding site" evidence="1">
    <location>
        <begin position="22"/>
        <end position="23"/>
    </location>
    <ligand>
        <name>phosphoenolpyruvate</name>
        <dbReference type="ChEBI" id="CHEBI:58702"/>
    </ligand>
</feature>
<feature type="binding site" evidence="1">
    <location>
        <position position="93"/>
    </location>
    <ligand>
        <name>UDP-N-acetyl-alpha-D-glucosamine</name>
        <dbReference type="ChEBI" id="CHEBI:57705"/>
    </ligand>
</feature>
<feature type="binding site" evidence="1">
    <location>
        <begin position="122"/>
        <end position="126"/>
    </location>
    <ligand>
        <name>UDP-N-acetyl-alpha-D-glucosamine</name>
        <dbReference type="ChEBI" id="CHEBI:57705"/>
    </ligand>
</feature>
<feature type="binding site" evidence="1">
    <location>
        <position position="307"/>
    </location>
    <ligand>
        <name>UDP-N-acetyl-alpha-D-glucosamine</name>
        <dbReference type="ChEBI" id="CHEBI:57705"/>
    </ligand>
</feature>
<feature type="binding site" evidence="1">
    <location>
        <position position="329"/>
    </location>
    <ligand>
        <name>UDP-N-acetyl-alpha-D-glucosamine</name>
        <dbReference type="ChEBI" id="CHEBI:57705"/>
    </ligand>
</feature>
<feature type="modified residue" description="2-(S-cysteinyl)pyruvic acid O-phosphothioketal" evidence="1">
    <location>
        <position position="117"/>
    </location>
</feature>
<gene>
    <name evidence="1" type="primary">murA</name>
    <name type="ordered locus">Cpar_0581</name>
</gene>
<organism>
    <name type="scientific">Chlorobaculum parvum (strain DSM 263 / NCIMB 8327)</name>
    <name type="common">Chlorobium vibrioforme subsp. thiosulfatophilum</name>
    <dbReference type="NCBI Taxonomy" id="517417"/>
    <lineage>
        <taxon>Bacteria</taxon>
        <taxon>Pseudomonadati</taxon>
        <taxon>Chlorobiota</taxon>
        <taxon>Chlorobiia</taxon>
        <taxon>Chlorobiales</taxon>
        <taxon>Chlorobiaceae</taxon>
        <taxon>Chlorobaculum</taxon>
    </lineage>
</organism>
<proteinExistence type="inferred from homology"/>
<comment type="function">
    <text evidence="1">Cell wall formation. Adds enolpyruvyl to UDP-N-acetylglucosamine.</text>
</comment>
<comment type="catalytic activity">
    <reaction evidence="1">
        <text>phosphoenolpyruvate + UDP-N-acetyl-alpha-D-glucosamine = UDP-N-acetyl-3-O-(1-carboxyvinyl)-alpha-D-glucosamine + phosphate</text>
        <dbReference type="Rhea" id="RHEA:18681"/>
        <dbReference type="ChEBI" id="CHEBI:43474"/>
        <dbReference type="ChEBI" id="CHEBI:57705"/>
        <dbReference type="ChEBI" id="CHEBI:58702"/>
        <dbReference type="ChEBI" id="CHEBI:68483"/>
        <dbReference type="EC" id="2.5.1.7"/>
    </reaction>
</comment>
<comment type="pathway">
    <text evidence="1">Cell wall biogenesis; peptidoglycan biosynthesis.</text>
</comment>
<comment type="subcellular location">
    <subcellularLocation>
        <location evidence="1">Cytoplasm</location>
    </subcellularLocation>
</comment>
<comment type="similarity">
    <text evidence="1">Belongs to the EPSP synthase family. MurA subfamily.</text>
</comment>
<dbReference type="EC" id="2.5.1.7" evidence="1"/>
<dbReference type="EMBL" id="CP001099">
    <property type="protein sequence ID" value="ACF11001.1"/>
    <property type="molecule type" value="Genomic_DNA"/>
</dbReference>
<dbReference type="RefSeq" id="WP_012501834.1">
    <property type="nucleotide sequence ID" value="NC_011027.1"/>
</dbReference>
<dbReference type="SMR" id="B3QM48"/>
<dbReference type="STRING" id="517417.Cpar_0581"/>
<dbReference type="KEGG" id="cpc:Cpar_0581"/>
<dbReference type="eggNOG" id="COG0766">
    <property type="taxonomic scope" value="Bacteria"/>
</dbReference>
<dbReference type="HOGENOM" id="CLU_027387_0_0_10"/>
<dbReference type="OrthoDB" id="9803760at2"/>
<dbReference type="UniPathway" id="UPA00219"/>
<dbReference type="Proteomes" id="UP000008811">
    <property type="component" value="Chromosome"/>
</dbReference>
<dbReference type="GO" id="GO:0005737">
    <property type="term" value="C:cytoplasm"/>
    <property type="evidence" value="ECO:0007669"/>
    <property type="project" value="UniProtKB-SubCell"/>
</dbReference>
<dbReference type="GO" id="GO:0008760">
    <property type="term" value="F:UDP-N-acetylglucosamine 1-carboxyvinyltransferase activity"/>
    <property type="evidence" value="ECO:0007669"/>
    <property type="project" value="UniProtKB-UniRule"/>
</dbReference>
<dbReference type="GO" id="GO:0051301">
    <property type="term" value="P:cell division"/>
    <property type="evidence" value="ECO:0007669"/>
    <property type="project" value="UniProtKB-KW"/>
</dbReference>
<dbReference type="GO" id="GO:0071555">
    <property type="term" value="P:cell wall organization"/>
    <property type="evidence" value="ECO:0007669"/>
    <property type="project" value="UniProtKB-KW"/>
</dbReference>
<dbReference type="GO" id="GO:0009252">
    <property type="term" value="P:peptidoglycan biosynthetic process"/>
    <property type="evidence" value="ECO:0007669"/>
    <property type="project" value="UniProtKB-UniRule"/>
</dbReference>
<dbReference type="GO" id="GO:0008360">
    <property type="term" value="P:regulation of cell shape"/>
    <property type="evidence" value="ECO:0007669"/>
    <property type="project" value="UniProtKB-KW"/>
</dbReference>
<dbReference type="GO" id="GO:0019277">
    <property type="term" value="P:UDP-N-acetylgalactosamine biosynthetic process"/>
    <property type="evidence" value="ECO:0007669"/>
    <property type="project" value="InterPro"/>
</dbReference>
<dbReference type="CDD" id="cd01555">
    <property type="entry name" value="UdpNAET"/>
    <property type="match status" value="1"/>
</dbReference>
<dbReference type="FunFam" id="3.65.10.10:FF:000001">
    <property type="entry name" value="UDP-N-acetylglucosamine 1-carboxyvinyltransferase"/>
    <property type="match status" value="1"/>
</dbReference>
<dbReference type="Gene3D" id="3.65.10.10">
    <property type="entry name" value="Enolpyruvate transferase domain"/>
    <property type="match status" value="2"/>
</dbReference>
<dbReference type="HAMAP" id="MF_00111">
    <property type="entry name" value="MurA"/>
    <property type="match status" value="1"/>
</dbReference>
<dbReference type="InterPro" id="IPR001986">
    <property type="entry name" value="Enolpyruvate_Tfrase_dom"/>
</dbReference>
<dbReference type="InterPro" id="IPR036968">
    <property type="entry name" value="Enolpyruvate_Tfrase_sf"/>
</dbReference>
<dbReference type="InterPro" id="IPR050068">
    <property type="entry name" value="MurA_subfamily"/>
</dbReference>
<dbReference type="InterPro" id="IPR013792">
    <property type="entry name" value="RNA3'P_cycl/enolpyr_Trfase_a/b"/>
</dbReference>
<dbReference type="InterPro" id="IPR005750">
    <property type="entry name" value="UDP_GlcNAc_COvinyl_MurA"/>
</dbReference>
<dbReference type="NCBIfam" id="TIGR01072">
    <property type="entry name" value="murA"/>
    <property type="match status" value="1"/>
</dbReference>
<dbReference type="NCBIfam" id="NF006873">
    <property type="entry name" value="PRK09369.1"/>
    <property type="match status" value="1"/>
</dbReference>
<dbReference type="PANTHER" id="PTHR43783">
    <property type="entry name" value="UDP-N-ACETYLGLUCOSAMINE 1-CARBOXYVINYLTRANSFERASE"/>
    <property type="match status" value="1"/>
</dbReference>
<dbReference type="PANTHER" id="PTHR43783:SF1">
    <property type="entry name" value="UDP-N-ACETYLGLUCOSAMINE 1-CARBOXYVINYLTRANSFERASE"/>
    <property type="match status" value="1"/>
</dbReference>
<dbReference type="Pfam" id="PF00275">
    <property type="entry name" value="EPSP_synthase"/>
    <property type="match status" value="1"/>
</dbReference>
<dbReference type="SUPFAM" id="SSF55205">
    <property type="entry name" value="EPT/RTPC-like"/>
    <property type="match status" value="1"/>
</dbReference>
<accession>B3QM48</accession>
<name>MURA_CHLP8</name>
<sequence>MNKLVIRGGKKLSGTVAASGSKNSALPVIAATLLTPDGTFGINRIPDLKDVRTFIQLLEYLGAAVSFENNRLEVSSSDLKSIEAPYELVKKMRASIYVLGPLLARFGHTRVSLPGGCAFGPRPVDLHIMAMEKLGATVTIEQGFIDAKVNGSRLRGAEIDFPISSVGATGNALMAAVTAEGKTVLQNAALEPEIECLCRFLQKMGANISGIGTTTLVIEGVDQLKAVEFDNIFDRIEAGTLLGAAAITGGSVTVTGTVPEHLGSVLDAFRQAGCIVTVKDDAITLTAPEELQPVDITARPYPEFPTDMQAQWMALMTQAHGDSTIIDRIYLERFNHLPELNRLGAHIEIRDNWALVHGPQELTGTKVMSTDLRASACLVLAGLVAKETTEVLRVYHLDRGYESIEKKLSALGADIKREQYQEFS</sequence>
<protein>
    <recommendedName>
        <fullName evidence="1">UDP-N-acetylglucosamine 1-carboxyvinyltransferase</fullName>
        <ecNumber evidence="1">2.5.1.7</ecNumber>
    </recommendedName>
    <alternativeName>
        <fullName evidence="1">Enoylpyruvate transferase</fullName>
    </alternativeName>
    <alternativeName>
        <fullName evidence="1">UDP-N-acetylglucosamine enolpyruvyl transferase</fullName>
        <shortName evidence="1">EPT</shortName>
    </alternativeName>
</protein>
<keyword id="KW-0131">Cell cycle</keyword>
<keyword id="KW-0132">Cell division</keyword>
<keyword id="KW-0133">Cell shape</keyword>
<keyword id="KW-0961">Cell wall biogenesis/degradation</keyword>
<keyword id="KW-0963">Cytoplasm</keyword>
<keyword id="KW-0573">Peptidoglycan synthesis</keyword>
<keyword id="KW-0670">Pyruvate</keyword>
<keyword id="KW-0808">Transferase</keyword>